<accession>Q8NDX2</accession>
<accession>B3KXZ6</accession>
<accession>B7ZKV4</accession>
<accession>Q17RQ8</accession>
<proteinExistence type="evidence at protein level"/>
<keyword id="KW-0025">Alternative splicing</keyword>
<keyword id="KW-1003">Cell membrane</keyword>
<keyword id="KW-0868">Chloride</keyword>
<keyword id="KW-0869">Chloride channel</keyword>
<keyword id="KW-0968">Cytoplasmic vesicle</keyword>
<keyword id="KW-0209">Deafness</keyword>
<keyword id="KW-0225">Disease variant</keyword>
<keyword id="KW-0325">Glycoprotein</keyword>
<keyword id="KW-1009">Hearing</keyword>
<keyword id="KW-0407">Ion channel</keyword>
<keyword id="KW-0406">Ion transport</keyword>
<keyword id="KW-0472">Membrane</keyword>
<keyword id="KW-0532">Neurotransmitter transport</keyword>
<keyword id="KW-1010">Non-syndromic deafness</keyword>
<keyword id="KW-0592">Phosphate transport</keyword>
<keyword id="KW-1267">Proteomics identification</keyword>
<keyword id="KW-1185">Reference proteome</keyword>
<keyword id="KW-0915">Sodium</keyword>
<keyword id="KW-0739">Sodium transport</keyword>
<keyword id="KW-0769">Symport</keyword>
<keyword id="KW-0770">Synapse</keyword>
<keyword id="KW-0771">Synaptosome</keyword>
<keyword id="KW-0812">Transmembrane</keyword>
<keyword id="KW-1133">Transmembrane helix</keyword>
<keyword id="KW-0813">Transport</keyword>
<reference key="1">
    <citation type="journal article" date="2002" name="EMBO Rep.">
        <title>Molecular cloning and functional characterization of human vesicular glutamate transporter 3.</title>
        <authorList>
            <person name="Takamori S."/>
            <person name="Malherbe P."/>
            <person name="Broger C."/>
            <person name="Jahn R."/>
        </authorList>
    </citation>
    <scope>NUCLEOTIDE SEQUENCE [MRNA] (ISOFORM 1)</scope>
    <scope>FUNCTION</scope>
    <scope>TRANSPORTER ACTIVITY</scope>
    <scope>TISSUE SPECIFICITY</scope>
    <source>
        <tissue>Brain</tissue>
    </source>
</reference>
<reference key="2">
    <citation type="journal article" date="2004" name="Nat. Genet.">
        <title>Complete sequencing and characterization of 21,243 full-length human cDNAs.</title>
        <authorList>
            <person name="Ota T."/>
            <person name="Suzuki Y."/>
            <person name="Nishikawa T."/>
            <person name="Otsuki T."/>
            <person name="Sugiyama T."/>
            <person name="Irie R."/>
            <person name="Wakamatsu A."/>
            <person name="Hayashi K."/>
            <person name="Sato H."/>
            <person name="Nagai K."/>
            <person name="Kimura K."/>
            <person name="Makita H."/>
            <person name="Sekine M."/>
            <person name="Obayashi M."/>
            <person name="Nishi T."/>
            <person name="Shibahara T."/>
            <person name="Tanaka T."/>
            <person name="Ishii S."/>
            <person name="Yamamoto J."/>
            <person name="Saito K."/>
            <person name="Kawai Y."/>
            <person name="Isono Y."/>
            <person name="Nakamura Y."/>
            <person name="Nagahari K."/>
            <person name="Murakami K."/>
            <person name="Yasuda T."/>
            <person name="Iwayanagi T."/>
            <person name="Wagatsuma M."/>
            <person name="Shiratori A."/>
            <person name="Sudo H."/>
            <person name="Hosoiri T."/>
            <person name="Kaku Y."/>
            <person name="Kodaira H."/>
            <person name="Kondo H."/>
            <person name="Sugawara M."/>
            <person name="Takahashi M."/>
            <person name="Kanda K."/>
            <person name="Yokoi T."/>
            <person name="Furuya T."/>
            <person name="Kikkawa E."/>
            <person name="Omura Y."/>
            <person name="Abe K."/>
            <person name="Kamihara K."/>
            <person name="Katsuta N."/>
            <person name="Sato K."/>
            <person name="Tanikawa M."/>
            <person name="Yamazaki M."/>
            <person name="Ninomiya K."/>
            <person name="Ishibashi T."/>
            <person name="Yamashita H."/>
            <person name="Murakawa K."/>
            <person name="Fujimori K."/>
            <person name="Tanai H."/>
            <person name="Kimata M."/>
            <person name="Watanabe M."/>
            <person name="Hiraoka S."/>
            <person name="Chiba Y."/>
            <person name="Ishida S."/>
            <person name="Ono Y."/>
            <person name="Takiguchi S."/>
            <person name="Watanabe S."/>
            <person name="Yosida M."/>
            <person name="Hotuta T."/>
            <person name="Kusano J."/>
            <person name="Kanehori K."/>
            <person name="Takahashi-Fujii A."/>
            <person name="Hara H."/>
            <person name="Tanase T.-O."/>
            <person name="Nomura Y."/>
            <person name="Togiya S."/>
            <person name="Komai F."/>
            <person name="Hara R."/>
            <person name="Takeuchi K."/>
            <person name="Arita M."/>
            <person name="Imose N."/>
            <person name="Musashino K."/>
            <person name="Yuuki H."/>
            <person name="Oshima A."/>
            <person name="Sasaki N."/>
            <person name="Aotsuka S."/>
            <person name="Yoshikawa Y."/>
            <person name="Matsunawa H."/>
            <person name="Ichihara T."/>
            <person name="Shiohata N."/>
            <person name="Sano S."/>
            <person name="Moriya S."/>
            <person name="Momiyama H."/>
            <person name="Satoh N."/>
            <person name="Takami S."/>
            <person name="Terashima Y."/>
            <person name="Suzuki O."/>
            <person name="Nakagawa S."/>
            <person name="Senoh A."/>
            <person name="Mizoguchi H."/>
            <person name="Goto Y."/>
            <person name="Shimizu F."/>
            <person name="Wakebe H."/>
            <person name="Hishigaki H."/>
            <person name="Watanabe T."/>
            <person name="Sugiyama A."/>
            <person name="Takemoto M."/>
            <person name="Kawakami B."/>
            <person name="Yamazaki M."/>
            <person name="Watanabe K."/>
            <person name="Kumagai A."/>
            <person name="Itakura S."/>
            <person name="Fukuzumi Y."/>
            <person name="Fujimori Y."/>
            <person name="Komiyama M."/>
            <person name="Tashiro H."/>
            <person name="Tanigami A."/>
            <person name="Fujiwara T."/>
            <person name="Ono T."/>
            <person name="Yamada K."/>
            <person name="Fujii Y."/>
            <person name="Ozaki K."/>
            <person name="Hirao M."/>
            <person name="Ohmori Y."/>
            <person name="Kawabata A."/>
            <person name="Hikiji T."/>
            <person name="Kobatake N."/>
            <person name="Inagaki H."/>
            <person name="Ikema Y."/>
            <person name="Okamoto S."/>
            <person name="Okitani R."/>
            <person name="Kawakami T."/>
            <person name="Noguchi S."/>
            <person name="Itoh T."/>
            <person name="Shigeta K."/>
            <person name="Senba T."/>
            <person name="Matsumura K."/>
            <person name="Nakajima Y."/>
            <person name="Mizuno T."/>
            <person name="Morinaga M."/>
            <person name="Sasaki M."/>
            <person name="Togashi T."/>
            <person name="Oyama M."/>
            <person name="Hata H."/>
            <person name="Watanabe M."/>
            <person name="Komatsu T."/>
            <person name="Mizushima-Sugano J."/>
            <person name="Satoh T."/>
            <person name="Shirai Y."/>
            <person name="Takahashi Y."/>
            <person name="Nakagawa K."/>
            <person name="Okumura K."/>
            <person name="Nagase T."/>
            <person name="Nomura N."/>
            <person name="Kikuchi H."/>
            <person name="Masuho Y."/>
            <person name="Yamashita R."/>
            <person name="Nakai K."/>
            <person name="Yada T."/>
            <person name="Nakamura Y."/>
            <person name="Ohara O."/>
            <person name="Isogai T."/>
            <person name="Sugano S."/>
        </authorList>
    </citation>
    <scope>NUCLEOTIDE SEQUENCE [LARGE SCALE MRNA] (ISOFORM 1)</scope>
    <source>
        <tissue>Thymus</tissue>
    </source>
</reference>
<reference key="3">
    <citation type="submission" date="2005-07" db="EMBL/GenBank/DDBJ databases">
        <authorList>
            <person name="Mural R.J."/>
            <person name="Istrail S."/>
            <person name="Sutton G.G."/>
            <person name="Florea L."/>
            <person name="Halpern A.L."/>
            <person name="Mobarry C.M."/>
            <person name="Lippert R."/>
            <person name="Walenz B."/>
            <person name="Shatkay H."/>
            <person name="Dew I."/>
            <person name="Miller J.R."/>
            <person name="Flanigan M.J."/>
            <person name="Edwards N.J."/>
            <person name="Bolanos R."/>
            <person name="Fasulo D."/>
            <person name="Halldorsson B.V."/>
            <person name="Hannenhalli S."/>
            <person name="Turner R."/>
            <person name="Yooseph S."/>
            <person name="Lu F."/>
            <person name="Nusskern D.R."/>
            <person name="Shue B.C."/>
            <person name="Zheng X.H."/>
            <person name="Zhong F."/>
            <person name="Delcher A.L."/>
            <person name="Huson D.H."/>
            <person name="Kravitz S.A."/>
            <person name="Mouchard L."/>
            <person name="Reinert K."/>
            <person name="Remington K.A."/>
            <person name="Clark A.G."/>
            <person name="Waterman M.S."/>
            <person name="Eichler E.E."/>
            <person name="Adams M.D."/>
            <person name="Hunkapiller M.W."/>
            <person name="Myers E.W."/>
            <person name="Venter J.C."/>
        </authorList>
    </citation>
    <scope>NUCLEOTIDE SEQUENCE [LARGE SCALE GENOMIC DNA]</scope>
</reference>
<reference key="4">
    <citation type="journal article" date="2004" name="Genome Res.">
        <title>The status, quality, and expansion of the NIH full-length cDNA project: the Mammalian Gene Collection (MGC).</title>
        <authorList>
            <consortium name="The MGC Project Team"/>
        </authorList>
    </citation>
    <scope>NUCLEOTIDE SEQUENCE [LARGE SCALE MRNA] (ISOFORM 2)</scope>
    <source>
        <tissue>Heart</tissue>
        <tissue>Lung</tissue>
    </source>
</reference>
<reference key="5">
    <citation type="journal article" date="2021" name="Cell Rep.">
        <title>Vesicular Glutamate Transporters (SLCA17 A6, 7, 8) Control Synaptic Phosphate Levels.</title>
        <authorList>
            <person name="Cheret C."/>
            <person name="Ganzella M."/>
            <person name="Preobraschenski J."/>
            <person name="Jahn R."/>
            <person name="Ahnert-Hilger G."/>
        </authorList>
    </citation>
    <scope>FUNCTION</scope>
    <scope>TRANSPORTER ACTIVITY</scope>
    <scope>SUBCELLULAR LOCATION</scope>
</reference>
<reference key="6">
    <citation type="journal article" date="2008" name="Am. J. Hum. Genet.">
        <title>Impairment of SLC17A8 encoding vesicular glutamate transporter-3, VGLUT3, underlies nonsyndromic deafness DFNA25 and inner hair cell dysfunction in null mice.</title>
        <authorList>
            <person name="Ruel J."/>
            <person name="Emery S."/>
            <person name="Nouvian R."/>
            <person name="Bersot T."/>
            <person name="Amilhon B."/>
            <person name="Van Rybroek J.M."/>
            <person name="Rebillard G."/>
            <person name="Lenoir M."/>
            <person name="Eybalin M."/>
            <person name="Delprat B."/>
            <person name="Sivakumaran T.A."/>
            <person name="Giros B."/>
            <person name="El Mestikawy S."/>
            <person name="Moser T."/>
            <person name="Smith R.J.H."/>
            <person name="Lesperance M.M."/>
            <person name="Puel J.-L."/>
        </authorList>
    </citation>
    <scope>VARIANT DFNA25 VAL-211</scope>
</reference>
<organism>
    <name type="scientific">Homo sapiens</name>
    <name type="common">Human</name>
    <dbReference type="NCBI Taxonomy" id="9606"/>
    <lineage>
        <taxon>Eukaryota</taxon>
        <taxon>Metazoa</taxon>
        <taxon>Chordata</taxon>
        <taxon>Craniata</taxon>
        <taxon>Vertebrata</taxon>
        <taxon>Euteleostomi</taxon>
        <taxon>Mammalia</taxon>
        <taxon>Eutheria</taxon>
        <taxon>Euarchontoglires</taxon>
        <taxon>Primates</taxon>
        <taxon>Haplorrhini</taxon>
        <taxon>Catarrhini</taxon>
        <taxon>Hominidae</taxon>
        <taxon>Homo</taxon>
    </lineage>
</organism>
<name>VGLU3_HUMAN</name>
<dbReference type="EMBL" id="AJ459241">
    <property type="protein sequence ID" value="CAD30553.1"/>
    <property type="molecule type" value="mRNA"/>
</dbReference>
<dbReference type="EMBL" id="AK128319">
    <property type="protein sequence ID" value="BAG54658.1"/>
    <property type="molecule type" value="mRNA"/>
</dbReference>
<dbReference type="EMBL" id="CH471054">
    <property type="protein sequence ID" value="EAW97637.1"/>
    <property type="molecule type" value="Genomic_DNA"/>
</dbReference>
<dbReference type="EMBL" id="BC117229">
    <property type="protein sequence ID" value="AAI17230.1"/>
    <property type="molecule type" value="mRNA"/>
</dbReference>
<dbReference type="EMBL" id="BC143396">
    <property type="protein sequence ID" value="AAI43397.1"/>
    <property type="molecule type" value="mRNA"/>
</dbReference>
<dbReference type="CCDS" id="CCDS44957.1">
    <molecule id="Q8NDX2-2"/>
</dbReference>
<dbReference type="CCDS" id="CCDS9077.1">
    <molecule id="Q8NDX2-1"/>
</dbReference>
<dbReference type="RefSeq" id="NP_001138760.1">
    <molecule id="Q8NDX2-2"/>
    <property type="nucleotide sequence ID" value="NM_001145288.2"/>
</dbReference>
<dbReference type="RefSeq" id="NP_647480.1">
    <molecule id="Q8NDX2-1"/>
    <property type="nucleotide sequence ID" value="NM_139319.3"/>
</dbReference>
<dbReference type="SMR" id="Q8NDX2"/>
<dbReference type="BioGRID" id="128880">
    <property type="interactions" value="13"/>
</dbReference>
<dbReference type="FunCoup" id="Q8NDX2">
    <property type="interactions" value="354"/>
</dbReference>
<dbReference type="IntAct" id="Q8NDX2">
    <property type="interactions" value="6"/>
</dbReference>
<dbReference type="STRING" id="9606.ENSP00000316909"/>
<dbReference type="TCDB" id="2.A.1.14.32">
    <property type="family name" value="the major facilitator superfamily (mfs)"/>
</dbReference>
<dbReference type="GlyCosmos" id="Q8NDX2">
    <property type="glycosylation" value="1 site, No reported glycans"/>
</dbReference>
<dbReference type="GlyGen" id="Q8NDX2">
    <property type="glycosylation" value="1 site"/>
</dbReference>
<dbReference type="BioMuta" id="SLC17A8"/>
<dbReference type="DMDM" id="74723817"/>
<dbReference type="MassIVE" id="Q8NDX2"/>
<dbReference type="PaxDb" id="9606-ENSP00000316909"/>
<dbReference type="PeptideAtlas" id="Q8NDX2"/>
<dbReference type="Antibodypedia" id="57947">
    <property type="antibodies" value="98 antibodies from 16 providers"/>
</dbReference>
<dbReference type="DNASU" id="246213"/>
<dbReference type="Ensembl" id="ENST00000323346.10">
    <molecule id="Q8NDX2-1"/>
    <property type="protein sequence ID" value="ENSP00000316909.4"/>
    <property type="gene ID" value="ENSG00000179520.11"/>
</dbReference>
<dbReference type="Ensembl" id="ENST00000392989.3">
    <molecule id="Q8NDX2-2"/>
    <property type="protein sequence ID" value="ENSP00000376715.3"/>
    <property type="gene ID" value="ENSG00000179520.11"/>
</dbReference>
<dbReference type="GeneID" id="246213"/>
<dbReference type="KEGG" id="hsa:246213"/>
<dbReference type="MANE-Select" id="ENST00000323346.10">
    <property type="protein sequence ID" value="ENSP00000316909.4"/>
    <property type="RefSeq nucleotide sequence ID" value="NM_139319.3"/>
    <property type="RefSeq protein sequence ID" value="NP_647480.1"/>
</dbReference>
<dbReference type="UCSC" id="uc009ztx.4">
    <molecule id="Q8NDX2-1"/>
    <property type="organism name" value="human"/>
</dbReference>
<dbReference type="AGR" id="HGNC:20151"/>
<dbReference type="CTD" id="246213"/>
<dbReference type="DisGeNET" id="246213"/>
<dbReference type="GeneCards" id="SLC17A8"/>
<dbReference type="GeneReviews" id="SLC17A8"/>
<dbReference type="HGNC" id="HGNC:20151">
    <property type="gene designation" value="SLC17A8"/>
</dbReference>
<dbReference type="HPA" id="ENSG00000179520">
    <property type="expression patterns" value="Tissue enhanced (intestine, lymphoid tissue)"/>
</dbReference>
<dbReference type="MalaCards" id="SLC17A8"/>
<dbReference type="MIM" id="605583">
    <property type="type" value="phenotype"/>
</dbReference>
<dbReference type="MIM" id="607557">
    <property type="type" value="gene"/>
</dbReference>
<dbReference type="neXtProt" id="NX_Q8NDX2"/>
<dbReference type="OpenTargets" id="ENSG00000179520"/>
<dbReference type="Orphanet" id="90635">
    <property type="disease" value="Rare autosomal dominant non-syndromic sensorineural deafness type DFNA"/>
</dbReference>
<dbReference type="PharmGKB" id="PA223010"/>
<dbReference type="VEuPathDB" id="HostDB:ENSG00000179520"/>
<dbReference type="eggNOG" id="KOG2532">
    <property type="taxonomic scope" value="Eukaryota"/>
</dbReference>
<dbReference type="GeneTree" id="ENSGT00940000158187"/>
<dbReference type="HOGENOM" id="CLU_001265_5_0_1"/>
<dbReference type="InParanoid" id="Q8NDX2"/>
<dbReference type="OMA" id="VTTIFWN"/>
<dbReference type="OrthoDB" id="2985014at2759"/>
<dbReference type="PAN-GO" id="Q8NDX2">
    <property type="GO annotations" value="8 GO annotations based on evolutionary models"/>
</dbReference>
<dbReference type="PhylomeDB" id="Q8NDX2"/>
<dbReference type="TreeFam" id="TF313535"/>
<dbReference type="PathwayCommons" id="Q8NDX2"/>
<dbReference type="Reactome" id="R-HSA-428643">
    <property type="pathway name" value="Organic anion transporters"/>
</dbReference>
<dbReference type="Reactome" id="R-HSA-5619076">
    <property type="pathway name" value="Defective SLC17A8 causes autosomal dominant deafness 25 (DFNA25)"/>
</dbReference>
<dbReference type="Reactome" id="R-HSA-9662360">
    <property type="pathway name" value="Sensory processing of sound by inner hair cells of the cochlea"/>
</dbReference>
<dbReference type="SignaLink" id="Q8NDX2"/>
<dbReference type="BioGRID-ORCS" id="246213">
    <property type="hits" value="8 hits in 1150 CRISPR screens"/>
</dbReference>
<dbReference type="ChiTaRS" id="SLC17A8">
    <property type="organism name" value="human"/>
</dbReference>
<dbReference type="GeneWiki" id="SLC17A8"/>
<dbReference type="GenomeRNAi" id="246213"/>
<dbReference type="Pharos" id="Q8NDX2">
    <property type="development level" value="Tbio"/>
</dbReference>
<dbReference type="PRO" id="PR:Q8NDX2"/>
<dbReference type="Proteomes" id="UP000005640">
    <property type="component" value="Chromosome 12"/>
</dbReference>
<dbReference type="RNAct" id="Q8NDX2">
    <property type="molecule type" value="protein"/>
</dbReference>
<dbReference type="Bgee" id="ENSG00000179520">
    <property type="expression patterns" value="Expressed in male germ line stem cell (sensu Vertebrata) in testis and 62 other cell types or tissues"/>
</dbReference>
<dbReference type="GO" id="GO:0097440">
    <property type="term" value="C:apical dendrite"/>
    <property type="evidence" value="ECO:0007669"/>
    <property type="project" value="Ensembl"/>
</dbReference>
<dbReference type="GO" id="GO:0043679">
    <property type="term" value="C:axon terminus"/>
    <property type="evidence" value="ECO:0007669"/>
    <property type="project" value="Ensembl"/>
</dbReference>
<dbReference type="GO" id="GO:0097441">
    <property type="term" value="C:basal dendrite"/>
    <property type="evidence" value="ECO:0007669"/>
    <property type="project" value="Ensembl"/>
</dbReference>
<dbReference type="GO" id="GO:0034707">
    <property type="term" value="C:chloride channel complex"/>
    <property type="evidence" value="ECO:0007669"/>
    <property type="project" value="UniProtKB-KW"/>
</dbReference>
<dbReference type="GO" id="GO:0060076">
    <property type="term" value="C:excitatory synapse"/>
    <property type="evidence" value="ECO:0000318"/>
    <property type="project" value="GO_Central"/>
</dbReference>
<dbReference type="GO" id="GO:0097451">
    <property type="term" value="C:glial limiting end-foot"/>
    <property type="evidence" value="ECO:0007669"/>
    <property type="project" value="Ensembl"/>
</dbReference>
<dbReference type="GO" id="GO:0098978">
    <property type="term" value="C:glutamatergic synapse"/>
    <property type="evidence" value="ECO:0007669"/>
    <property type="project" value="Ensembl"/>
</dbReference>
<dbReference type="GO" id="GO:0005771">
    <property type="term" value="C:multivesicular body"/>
    <property type="evidence" value="ECO:0007669"/>
    <property type="project" value="Ensembl"/>
</dbReference>
<dbReference type="GO" id="GO:1990030">
    <property type="term" value="C:pericellular basket"/>
    <property type="evidence" value="ECO:0007669"/>
    <property type="project" value="Ensembl"/>
</dbReference>
<dbReference type="GO" id="GO:0043204">
    <property type="term" value="C:perikaryon"/>
    <property type="evidence" value="ECO:0007669"/>
    <property type="project" value="Ensembl"/>
</dbReference>
<dbReference type="GO" id="GO:0005886">
    <property type="term" value="C:plasma membrane"/>
    <property type="evidence" value="ECO:0007669"/>
    <property type="project" value="UniProtKB-SubCell"/>
</dbReference>
<dbReference type="GO" id="GO:0030672">
    <property type="term" value="C:synaptic vesicle membrane"/>
    <property type="evidence" value="ECO:0000318"/>
    <property type="project" value="GO_Central"/>
</dbReference>
<dbReference type="GO" id="GO:0005254">
    <property type="term" value="F:chloride channel activity"/>
    <property type="evidence" value="ECO:0000250"/>
    <property type="project" value="UniProtKB"/>
</dbReference>
<dbReference type="GO" id="GO:0005313">
    <property type="term" value="F:L-glutamate transmembrane transporter activity"/>
    <property type="evidence" value="ECO:0000318"/>
    <property type="project" value="GO_Central"/>
</dbReference>
<dbReference type="GO" id="GO:0140788">
    <property type="term" value="F:L-glutamate uniporter activity"/>
    <property type="evidence" value="ECO:0000314"/>
    <property type="project" value="UniProtKB"/>
</dbReference>
<dbReference type="GO" id="GO:0005326">
    <property type="term" value="F:neurotransmitter transmembrane transporter activity"/>
    <property type="evidence" value="ECO:0000318"/>
    <property type="project" value="GO_Central"/>
</dbReference>
<dbReference type="GO" id="GO:0005436">
    <property type="term" value="F:sodium:phosphate symporter activity"/>
    <property type="evidence" value="ECO:0000314"/>
    <property type="project" value="UniProtKB"/>
</dbReference>
<dbReference type="GO" id="GO:0090102">
    <property type="term" value="P:cochlea development"/>
    <property type="evidence" value="ECO:0007669"/>
    <property type="project" value="Ensembl"/>
</dbReference>
<dbReference type="GO" id="GO:0051938">
    <property type="term" value="P:L-glutamate import"/>
    <property type="evidence" value="ECO:0000250"/>
    <property type="project" value="UniProtKB"/>
</dbReference>
<dbReference type="GO" id="GO:0015813">
    <property type="term" value="P:L-glutamate transmembrane transport"/>
    <property type="evidence" value="ECO:0000314"/>
    <property type="project" value="UniProtKB"/>
</dbReference>
<dbReference type="GO" id="GO:0006811">
    <property type="term" value="P:monoatomic ion transport"/>
    <property type="evidence" value="ECO:0000304"/>
    <property type="project" value="Reactome"/>
</dbReference>
<dbReference type="GO" id="GO:0003407">
    <property type="term" value="P:neural retina development"/>
    <property type="evidence" value="ECO:0007669"/>
    <property type="project" value="Ensembl"/>
</dbReference>
<dbReference type="GO" id="GO:0098700">
    <property type="term" value="P:neurotransmitter loading into synaptic vesicle"/>
    <property type="evidence" value="ECO:0000314"/>
    <property type="project" value="SynGO"/>
</dbReference>
<dbReference type="GO" id="GO:0055062">
    <property type="term" value="P:phosphate ion homeostasis"/>
    <property type="evidence" value="ECO:0000314"/>
    <property type="project" value="UniProtKB"/>
</dbReference>
<dbReference type="GO" id="GO:0051951">
    <property type="term" value="P:positive regulation of glutamate uptake involved in transmission of nerve impulse"/>
    <property type="evidence" value="ECO:0000250"/>
    <property type="project" value="UniProtKB"/>
</dbReference>
<dbReference type="GO" id="GO:0051631">
    <property type="term" value="P:regulation of acetylcholine uptake"/>
    <property type="evidence" value="ECO:0000250"/>
    <property type="project" value="UniProtKB"/>
</dbReference>
<dbReference type="GO" id="GO:0050803">
    <property type="term" value="P:regulation of synapse structure or activity"/>
    <property type="evidence" value="ECO:0000318"/>
    <property type="project" value="GO_Central"/>
</dbReference>
<dbReference type="GO" id="GO:0007605">
    <property type="term" value="P:sensory perception of sound"/>
    <property type="evidence" value="ECO:0007669"/>
    <property type="project" value="UniProtKB-KW"/>
</dbReference>
<dbReference type="GO" id="GO:0044341">
    <property type="term" value="P:sodium-dependent phosphate transport"/>
    <property type="evidence" value="ECO:0000305"/>
    <property type="project" value="UniProtKB"/>
</dbReference>
<dbReference type="GO" id="GO:0035249">
    <property type="term" value="P:synaptic transmission, glutamatergic"/>
    <property type="evidence" value="ECO:0000318"/>
    <property type="project" value="GO_Central"/>
</dbReference>
<dbReference type="CDD" id="cd17382">
    <property type="entry name" value="MFS_SLC17A6_7_8_VGluT"/>
    <property type="match status" value="1"/>
</dbReference>
<dbReference type="FunFam" id="1.20.1250.20:FF:000004">
    <property type="entry name" value="vesicular glutamate transporter 2 isoform X1"/>
    <property type="match status" value="1"/>
</dbReference>
<dbReference type="FunFam" id="1.20.1250.20:FF:000005">
    <property type="entry name" value="vesicular glutamate transporter 2 isoform X1"/>
    <property type="match status" value="1"/>
</dbReference>
<dbReference type="Gene3D" id="1.20.1250.20">
    <property type="entry name" value="MFS general substrate transporter like domains"/>
    <property type="match status" value="2"/>
</dbReference>
<dbReference type="InterPro" id="IPR011701">
    <property type="entry name" value="MFS"/>
</dbReference>
<dbReference type="InterPro" id="IPR020846">
    <property type="entry name" value="MFS_dom"/>
</dbReference>
<dbReference type="InterPro" id="IPR050382">
    <property type="entry name" value="MFS_Na/Anion_cotransporter"/>
</dbReference>
<dbReference type="InterPro" id="IPR036259">
    <property type="entry name" value="MFS_trans_sf"/>
</dbReference>
<dbReference type="PANTHER" id="PTHR11662">
    <property type="entry name" value="SOLUTE CARRIER FAMILY 17"/>
    <property type="match status" value="1"/>
</dbReference>
<dbReference type="PANTHER" id="PTHR11662:SF207">
    <property type="entry name" value="VESICULAR GLUTAMATE TRANSPORTER 3"/>
    <property type="match status" value="1"/>
</dbReference>
<dbReference type="Pfam" id="PF07690">
    <property type="entry name" value="MFS_1"/>
    <property type="match status" value="1"/>
</dbReference>
<dbReference type="SUPFAM" id="SSF103473">
    <property type="entry name" value="MFS general substrate transporter"/>
    <property type="match status" value="1"/>
</dbReference>
<dbReference type="PROSITE" id="PS50850">
    <property type="entry name" value="MFS"/>
    <property type="match status" value="1"/>
</dbReference>
<comment type="function">
    <text evidence="1 4 9">Multifunctional transporter that transports L-glutamate as well as multiple ions such as chloride, sodium and phosphate (PubMed:12151341, PubMed:33440152). At the synaptic vesicle membrane, mainly functions as an uniporter that mediates the uptake of L-glutamate into synaptic vesicles at presynaptic nerve terminals of excitatory neural cells (PubMed:12151341). The L-glutamate uniporter activity is electrogenic and is driven by the proton electrochemical gradient, mainly by the electrical gradient established by the vacuolar H(+)-ATPase across the synaptic vesicle membrane (PubMed:12151341). In addition, functions as a chloride channel that allows a chloride permeation through the synaptic vesicle membrane that affects the proton electrochemical gradient and promotes synaptic vesicles acidification (By similarity). At the plasma membrane, following exocytosis, functions as a symporter of Na(+) and phosphate from the extracellular space to the cytoplasm allowing synaptic phosphate homeostasis regulation (Probable). The symporter activity is electrogenic (PubMed:33440152). Moreover, operates synergistically with SLC18A3/VACHT under a constant H(+) gradient, thereby allowing striatal vesicular acetylcholine uptake (By similarity).</text>
</comment>
<comment type="catalytic activity">
    <reaction evidence="4">
        <text>L-glutamate(out) = L-glutamate(in)</text>
        <dbReference type="Rhea" id="RHEA:66336"/>
        <dbReference type="ChEBI" id="CHEBI:29985"/>
    </reaction>
</comment>
<comment type="catalytic activity">
    <reaction evidence="9">
        <text>3 Na(+)(out) + phosphate(out) = 3 Na(+)(in) + phosphate(in)</text>
        <dbReference type="Rhea" id="RHEA:71255"/>
        <dbReference type="ChEBI" id="CHEBI:29101"/>
        <dbReference type="ChEBI" id="CHEBI:43474"/>
    </reaction>
</comment>
<comment type="catalytic activity">
    <reaction evidence="1">
        <text>chloride(in) = chloride(out)</text>
        <dbReference type="Rhea" id="RHEA:29823"/>
        <dbReference type="ChEBI" id="CHEBI:17996"/>
    </reaction>
</comment>
<comment type="activity regulation">
    <text evidence="1">The L-glutamate uniporter activity exhibits a biphasic dependence on chloride concentration. Chloride channel activity is allosterically activated by lumenal H(+) and Cl(-) leading to synaptic vesicles acidification. The glutamate transport activity is allosterically activated by lumenal H(+) and Cl(-), preventing non-vesicular L-glutamate release.</text>
</comment>
<comment type="interaction">
    <interactant intactId="EBI-17249797">
        <id>Q8NDX2-2</id>
    </interactant>
    <interactant intactId="EBI-1752413">
        <id>P78329</id>
        <label>CYP4F2</label>
    </interactant>
    <organismsDiffer>false</organismsDiffer>
    <experiments>3</experiments>
</comment>
<comment type="interaction">
    <interactant intactId="EBI-17249797">
        <id>Q8NDX2-2</id>
    </interactant>
    <interactant intactId="EBI-10171534">
        <id>A0PK00</id>
        <label>TMEM120B</label>
    </interactant>
    <organismsDiffer>false</organismsDiffer>
    <experiments>3</experiments>
</comment>
<comment type="interaction">
    <interactant intactId="EBI-17249797">
        <id>Q8NDX2-2</id>
    </interactant>
    <interactant intactId="EBI-751210">
        <id>Q96EC8</id>
        <label>YIPF6</label>
    </interactant>
    <organismsDiffer>false</organismsDiffer>
    <experiments>3</experiments>
</comment>
<comment type="subcellular location">
    <subcellularLocation>
        <location evidence="1">Cytoplasmic vesicle</location>
        <location evidence="1">Secretory vesicle</location>
        <location evidence="1">Synaptic vesicle membrane</location>
    </subcellularLocation>
    <subcellularLocation>
        <location evidence="9">Cell membrane</location>
        <topology evidence="8">Multi-pass membrane protein</topology>
    </subcellularLocation>
    <subcellularLocation>
        <location evidence="1">Synapse</location>
        <location evidence="1">Synaptosome</location>
    </subcellularLocation>
</comment>
<comment type="alternative products">
    <event type="alternative splicing"/>
    <isoform>
        <id>Q8NDX2-1</id>
        <name>1</name>
        <sequence type="displayed"/>
    </isoform>
    <isoform>
        <id>Q8NDX2-2</id>
        <name>2</name>
        <sequence type="described" ref="VSP_033265"/>
    </isoform>
</comment>
<comment type="tissue specificity">
    <text evidence="4">Expressed in amygdala, cerebellum, hippocampus, medulla, spinal cord and thalamus.</text>
</comment>
<comment type="disease" evidence="5">
    <disease id="DI-00848">
        <name>Deafness, autosomal dominant, 25</name>
        <acronym>DFNA25</acronym>
        <description>A form of non-syndromic sensorineural hearing loss. Sensorineural deafness results from damage to the neural receptors of the inner ear, the nerve pathways to the brain, or the area of the brain that receives sound information. DFNA25 expression is variable in terms of onset and rate of progression, with an age-dependent penetrance resembling an early-onset presbycusis, or senile deafness, a progressive bilateral loss of hearing that occurs in the aged.</description>
        <dbReference type="MIM" id="605583"/>
    </disease>
    <text>The disease is caused by variants affecting the gene represented in this entry.</text>
</comment>
<comment type="similarity">
    <text evidence="8">Belongs to the major facilitator superfamily. Sodium/anion cotransporter family. VGLUT subfamily.</text>
</comment>
<sequence length="589" mass="64991">MPFKAFDTFKEKILKPGKEGVKNAVGDSLGILQRKIDGTTEEEDNIELNEEGRPVQTSRPSPPLCDCHCCGLPKRYIIAIMSGLGFCISFGIRCNLGVAIVEMVNNSTVYVDGKPEIQTAQFNWDPETVGLIHGSFFWGYIMTQIPGGFISNKFAANRVFGAAIFLTSTLNMFIPSAARVHYGCVMCVRILQGLVEGVTYPACHGMWSKWAPPLERSRLATTSFCGSYAGAVVAMPLAGVLVQYIGWSSVFYIYGMFGIIWYMFWLLQAYECPAAHPTISNEEKTYIETSIGEGANVVSLSKFSTPWKRFFTSLPVYAIIVANFCRSWTFYLLLISQPAYFEEVFGFAISKVGLLSAVPHMVMTIVVPIGGQLADYLRSRQILTTTAVRKIMNCGGFGMEATLLLVVGFSHTKGVAISFLVLAVGFSGFAISGFNVNHLDIAPRYASILMGISNGVGTLSGMVCPLIVGAMTRHKTREEWQNVFLIAALVHYSGVIFYGVFASGEKQEWADPENLSEEKCGIIDQDELAEEIELNHESFASPKKKMSYGATSQNCEVQKKEWKGQRGATLDEEELTSYQNEERNFSTIS</sequence>
<gene>
    <name evidence="10" type="primary">SLC17A8</name>
    <name type="synonym">VGLUT3</name>
</gene>
<feature type="chain" id="PRO_0000331614" description="Vesicular glutamate transporter 3">
    <location>
        <begin position="1"/>
        <end position="589"/>
    </location>
</feature>
<feature type="topological domain" description="Cytoplasmic" evidence="2">
    <location>
        <begin position="1"/>
        <end position="76"/>
    </location>
</feature>
<feature type="transmembrane region" description="Helical" evidence="2">
    <location>
        <begin position="77"/>
        <end position="97"/>
    </location>
</feature>
<feature type="topological domain" description="Vesicular" evidence="2">
    <location>
        <begin position="98"/>
        <end position="130"/>
    </location>
</feature>
<feature type="transmembrane region" description="Helical" evidence="2">
    <location>
        <begin position="131"/>
        <end position="151"/>
    </location>
</feature>
<feature type="topological domain" description="Cytoplasmic" evidence="2">
    <location>
        <begin position="152"/>
        <end position="153"/>
    </location>
</feature>
<feature type="transmembrane region" description="Helical" evidence="2">
    <location>
        <begin position="154"/>
        <end position="174"/>
    </location>
</feature>
<feature type="topological domain" description="Vesicular" evidence="2">
    <location>
        <begin position="175"/>
        <end position="182"/>
    </location>
</feature>
<feature type="transmembrane region" description="Helical" evidence="2">
    <location>
        <begin position="183"/>
        <end position="203"/>
    </location>
</feature>
<feature type="topological domain" description="Cytoplasmic" evidence="2">
    <location>
        <begin position="204"/>
        <end position="221"/>
    </location>
</feature>
<feature type="transmembrane region" description="Helical" evidence="2">
    <location>
        <begin position="222"/>
        <end position="242"/>
    </location>
</feature>
<feature type="topological domain" description="Vesicular" evidence="2">
    <location>
        <begin position="243"/>
        <end position="249"/>
    </location>
</feature>
<feature type="transmembrane region" description="Helical" evidence="2">
    <location>
        <begin position="250"/>
        <end position="270"/>
    </location>
</feature>
<feature type="topological domain" description="Cytoplasmic" evidence="2">
    <location>
        <begin position="271"/>
        <end position="314"/>
    </location>
</feature>
<feature type="transmembrane region" description="Helical" evidence="2">
    <location>
        <begin position="315"/>
        <end position="335"/>
    </location>
</feature>
<feature type="topological domain" description="Vesicular" evidence="2">
    <location>
        <begin position="336"/>
        <end position="353"/>
    </location>
</feature>
<feature type="transmembrane region" description="Helical" evidence="2">
    <location>
        <begin position="354"/>
        <end position="374"/>
    </location>
</feature>
<feature type="topological domain" description="Cytoplasmic" evidence="2">
    <location>
        <begin position="375"/>
        <end position="390"/>
    </location>
</feature>
<feature type="transmembrane region" description="Helical" evidence="2">
    <location>
        <begin position="391"/>
        <end position="411"/>
    </location>
</feature>
<feature type="topological domain" description="Vesicular" evidence="2">
    <location>
        <begin position="412"/>
        <end position="413"/>
    </location>
</feature>
<feature type="transmembrane region" description="Helical" evidence="2">
    <location>
        <begin position="414"/>
        <end position="434"/>
    </location>
</feature>
<feature type="topological domain" description="Cytoplasmic" evidence="2">
    <location>
        <begin position="435"/>
        <end position="447"/>
    </location>
</feature>
<feature type="transmembrane region" description="Helical" evidence="2">
    <location>
        <begin position="448"/>
        <end position="468"/>
    </location>
</feature>
<feature type="topological domain" description="Vesicular" evidence="2">
    <location>
        <begin position="469"/>
        <end position="481"/>
    </location>
</feature>
<feature type="transmembrane region" description="Helical" evidence="2">
    <location>
        <begin position="482"/>
        <end position="502"/>
    </location>
</feature>
<feature type="topological domain" description="Cytoplasmic" evidence="2">
    <location>
        <begin position="503"/>
        <end position="586"/>
    </location>
</feature>
<feature type="region of interest" description="Disordered" evidence="3">
    <location>
        <begin position="40"/>
        <end position="61"/>
    </location>
</feature>
<feature type="region of interest" description="Disordered" evidence="3">
    <location>
        <begin position="559"/>
        <end position="589"/>
    </location>
</feature>
<feature type="compositionally biased region" description="Acidic residues" evidence="3">
    <location>
        <begin position="40"/>
        <end position="49"/>
    </location>
</feature>
<feature type="compositionally biased region" description="Basic and acidic residues" evidence="3">
    <location>
        <begin position="580"/>
        <end position="589"/>
    </location>
</feature>
<feature type="glycosylation site" description="N-linked (GlcNAc...) asparagine" evidence="2">
    <location>
        <position position="106"/>
    </location>
</feature>
<feature type="splice variant" id="VSP_033265" description="In isoform 2." evidence="7">
    <location>
        <begin position="302"/>
        <end position="351"/>
    </location>
</feature>
<feature type="sequence variant" id="VAR_042905" description="In dbSNP:rs45610843.">
    <original>T</original>
    <variation>I</variation>
    <location>
        <position position="8"/>
    </location>
</feature>
<feature type="sequence variant" id="VAR_054130" description="In DFNA25; dbSNP:rs121918339." evidence="5">
    <original>A</original>
    <variation>V</variation>
    <location>
        <position position="211"/>
    </location>
</feature>
<feature type="sequence variant" id="VAR_054131" description="In dbSNP:rs11568530.">
    <original>A</original>
    <variation>T</variation>
    <location>
        <position position="220"/>
    </location>
</feature>
<feature type="sequence variant" id="VAR_054132" description="In dbSNP:rs11568543.">
    <original>G</original>
    <variation>E</variation>
    <location>
        <position position="246"/>
    </location>
</feature>
<evidence type="ECO:0000250" key="1">
    <source>
        <dbReference type="UniProtKB" id="Q7TSF2"/>
    </source>
</evidence>
<evidence type="ECO:0000255" key="2"/>
<evidence type="ECO:0000256" key="3">
    <source>
        <dbReference type="SAM" id="MobiDB-lite"/>
    </source>
</evidence>
<evidence type="ECO:0000269" key="4">
    <source>
    </source>
</evidence>
<evidence type="ECO:0000269" key="5">
    <source>
    </source>
</evidence>
<evidence type="ECO:0000303" key="6">
    <source>
    </source>
</evidence>
<evidence type="ECO:0000303" key="7">
    <source>
    </source>
</evidence>
<evidence type="ECO:0000305" key="8"/>
<evidence type="ECO:0000305" key="9">
    <source>
    </source>
</evidence>
<evidence type="ECO:0000312" key="10">
    <source>
        <dbReference type="HGNC" id="HGNC:20151"/>
    </source>
</evidence>
<protein>
    <recommendedName>
        <fullName evidence="6">Vesicular glutamate transporter 3</fullName>
        <shortName evidence="6">VGluT3</shortName>
    </recommendedName>
    <alternativeName>
        <fullName>Solute carrier family 17 member 8</fullName>
    </alternativeName>
</protein>